<feature type="chain" id="PRO_0000208543" description="Probable ECA polymerase">
    <location>
        <begin position="1"/>
        <end position="452"/>
    </location>
</feature>
<feature type="transmembrane region" description="Helical" evidence="1">
    <location>
        <begin position="6"/>
        <end position="26"/>
    </location>
</feature>
<feature type="transmembrane region" description="Helical" evidence="1">
    <location>
        <begin position="37"/>
        <end position="57"/>
    </location>
</feature>
<feature type="transmembrane region" description="Helical" evidence="1">
    <location>
        <begin position="63"/>
        <end position="83"/>
    </location>
</feature>
<feature type="transmembrane region" description="Helical" evidence="1">
    <location>
        <begin position="118"/>
        <end position="138"/>
    </location>
</feature>
<feature type="transmembrane region" description="Helical" evidence="1">
    <location>
        <begin position="155"/>
        <end position="175"/>
    </location>
</feature>
<feature type="transmembrane region" description="Helical" evidence="1">
    <location>
        <begin position="181"/>
        <end position="201"/>
    </location>
</feature>
<feature type="transmembrane region" description="Helical" evidence="1">
    <location>
        <begin position="207"/>
        <end position="227"/>
    </location>
</feature>
<feature type="transmembrane region" description="Helical" evidence="1">
    <location>
        <begin position="228"/>
        <end position="248"/>
    </location>
</feature>
<feature type="transmembrane region" description="Helical" evidence="1">
    <location>
        <begin position="341"/>
        <end position="361"/>
    </location>
</feature>
<feature type="transmembrane region" description="Helical" evidence="1">
    <location>
        <begin position="378"/>
        <end position="398"/>
    </location>
</feature>
<feature type="transmembrane region" description="Helical" evidence="1">
    <location>
        <begin position="410"/>
        <end position="430"/>
    </location>
</feature>
<keyword id="KW-0997">Cell inner membrane</keyword>
<keyword id="KW-1003">Cell membrane</keyword>
<keyword id="KW-0472">Membrane</keyword>
<keyword id="KW-0812">Transmembrane</keyword>
<keyword id="KW-1133">Transmembrane helix</keyword>
<proteinExistence type="inferred from homology"/>
<evidence type="ECO:0000255" key="1">
    <source>
        <dbReference type="HAMAP-Rule" id="MF_01003"/>
    </source>
</evidence>
<protein>
    <recommendedName>
        <fullName evidence="1">Probable ECA polymerase</fullName>
    </recommendedName>
</protein>
<gene>
    <name evidence="1" type="primary">wzyE</name>
    <name type="synonym">rffT</name>
    <name type="ordered locus">STY3627</name>
    <name type="ordered locus">t3369</name>
</gene>
<name>WZYE_SALTI</name>
<accession>Q8Z396</accession>
<sequence>MSLMQFSGLLVVWLLSTLFIATLTWFEFRRVRFNFNVFFSLLFLLTFFFGFPLTSVLVFRFDVGVAPPEILLQALLSAACFYGVYYVTYKTRLRKRVVDVPRKPLFTMNRVETHLTWVILMGIALVSVAIFFMHNGFLLFRLHSYSQIFSSEVSGVALKRFFYFFIPAMLVVYFLRQDSKAWLFFLVSTVAFGLLTYMIVGGTRANIIIAFAIFLFIGIIRGWISLWMLAAAGVLGIVGMFWLALKRYGLNVSGDEAFYTFLYLTRDTFSPWENLALLLQNYHNIDFQGLAPIVRDFYVFIPTWLWPGRPSIVLNSANYFTWEVLNNHSGLAISPTLIGSLVVMGGALFIPLGAIVVGLIIKWFDWLYELGNREPNRYKAAILHSFCFGAIFNMIVLAREGLDSFVSRVVFFLVVFGASLLVAKLLFWLFDSAGLIHKRTTSLPQAQMDGKL</sequence>
<reference key="1">
    <citation type="journal article" date="2001" name="Nature">
        <title>Complete genome sequence of a multiple drug resistant Salmonella enterica serovar Typhi CT18.</title>
        <authorList>
            <person name="Parkhill J."/>
            <person name="Dougan G."/>
            <person name="James K.D."/>
            <person name="Thomson N.R."/>
            <person name="Pickard D."/>
            <person name="Wain J."/>
            <person name="Churcher C.M."/>
            <person name="Mungall K.L."/>
            <person name="Bentley S.D."/>
            <person name="Holden M.T.G."/>
            <person name="Sebaihia M."/>
            <person name="Baker S."/>
            <person name="Basham D."/>
            <person name="Brooks K."/>
            <person name="Chillingworth T."/>
            <person name="Connerton P."/>
            <person name="Cronin A."/>
            <person name="Davis P."/>
            <person name="Davies R.M."/>
            <person name="Dowd L."/>
            <person name="White N."/>
            <person name="Farrar J."/>
            <person name="Feltwell T."/>
            <person name="Hamlin N."/>
            <person name="Haque A."/>
            <person name="Hien T.T."/>
            <person name="Holroyd S."/>
            <person name="Jagels K."/>
            <person name="Krogh A."/>
            <person name="Larsen T.S."/>
            <person name="Leather S."/>
            <person name="Moule S."/>
            <person name="O'Gaora P."/>
            <person name="Parry C."/>
            <person name="Quail M.A."/>
            <person name="Rutherford K.M."/>
            <person name="Simmonds M."/>
            <person name="Skelton J."/>
            <person name="Stevens K."/>
            <person name="Whitehead S."/>
            <person name="Barrell B.G."/>
        </authorList>
    </citation>
    <scope>NUCLEOTIDE SEQUENCE [LARGE SCALE GENOMIC DNA]</scope>
    <source>
        <strain>CT18</strain>
    </source>
</reference>
<reference key="2">
    <citation type="journal article" date="2003" name="J. Bacteriol.">
        <title>Comparative genomics of Salmonella enterica serovar Typhi strains Ty2 and CT18.</title>
        <authorList>
            <person name="Deng W."/>
            <person name="Liou S.-R."/>
            <person name="Plunkett G. III"/>
            <person name="Mayhew G.F."/>
            <person name="Rose D.J."/>
            <person name="Burland V."/>
            <person name="Kodoyianni V."/>
            <person name="Schwartz D.C."/>
            <person name="Blattner F.R."/>
        </authorList>
    </citation>
    <scope>NUCLEOTIDE SEQUENCE [LARGE SCALE GENOMIC DNA]</scope>
    <source>
        <strain>ATCC 700931 / Ty2</strain>
    </source>
</reference>
<dbReference type="EMBL" id="AL513382">
    <property type="protein sequence ID" value="CAD09388.1"/>
    <property type="molecule type" value="Genomic_DNA"/>
</dbReference>
<dbReference type="EMBL" id="AE014613">
    <property type="protein sequence ID" value="AAO70893.1"/>
    <property type="molecule type" value="Genomic_DNA"/>
</dbReference>
<dbReference type="RefSeq" id="NP_457819.1">
    <property type="nucleotide sequence ID" value="NC_003198.1"/>
</dbReference>
<dbReference type="RefSeq" id="WP_000055604.1">
    <property type="nucleotide sequence ID" value="NZ_WSUR01000032.1"/>
</dbReference>
<dbReference type="STRING" id="220341.gene:17587483"/>
<dbReference type="KEGG" id="stt:t3369"/>
<dbReference type="KEGG" id="sty:STY3627"/>
<dbReference type="PATRIC" id="fig|220341.7.peg.3696"/>
<dbReference type="eggNOG" id="ENOG502Z7MA">
    <property type="taxonomic scope" value="Bacteria"/>
</dbReference>
<dbReference type="HOGENOM" id="CLU_049711_0_0_6"/>
<dbReference type="OMA" id="WLWPDRP"/>
<dbReference type="OrthoDB" id="6415259at2"/>
<dbReference type="UniPathway" id="UPA00566"/>
<dbReference type="Proteomes" id="UP000000541">
    <property type="component" value="Chromosome"/>
</dbReference>
<dbReference type="Proteomes" id="UP000002670">
    <property type="component" value="Chromosome"/>
</dbReference>
<dbReference type="GO" id="GO:0005886">
    <property type="term" value="C:plasma membrane"/>
    <property type="evidence" value="ECO:0007669"/>
    <property type="project" value="UniProtKB-SubCell"/>
</dbReference>
<dbReference type="GO" id="GO:0009246">
    <property type="term" value="P:enterobacterial common antigen biosynthetic process"/>
    <property type="evidence" value="ECO:0007669"/>
    <property type="project" value="UniProtKB-UniRule"/>
</dbReference>
<dbReference type="HAMAP" id="MF_01003">
    <property type="entry name" value="WzyE"/>
    <property type="match status" value="1"/>
</dbReference>
<dbReference type="InterPro" id="IPR010691">
    <property type="entry name" value="WzyE"/>
</dbReference>
<dbReference type="NCBIfam" id="NF002820">
    <property type="entry name" value="PRK02975.1"/>
    <property type="match status" value="1"/>
</dbReference>
<dbReference type="Pfam" id="PF06899">
    <property type="entry name" value="WzyE"/>
    <property type="match status" value="1"/>
</dbReference>
<organism>
    <name type="scientific">Salmonella typhi</name>
    <dbReference type="NCBI Taxonomy" id="90370"/>
    <lineage>
        <taxon>Bacteria</taxon>
        <taxon>Pseudomonadati</taxon>
        <taxon>Pseudomonadota</taxon>
        <taxon>Gammaproteobacteria</taxon>
        <taxon>Enterobacterales</taxon>
        <taxon>Enterobacteriaceae</taxon>
        <taxon>Salmonella</taxon>
    </lineage>
</organism>
<comment type="function">
    <text evidence="1">Probably involved in the polymerization of enterobacterial common antigen (ECA) trisaccharide repeat units.</text>
</comment>
<comment type="pathway">
    <text evidence="1">Bacterial outer membrane biogenesis; enterobacterial common antigen biosynthesis.</text>
</comment>
<comment type="subunit">
    <text evidence="1">Probably part of a complex composed of WzxE, WzyE and WzzE.</text>
</comment>
<comment type="subcellular location">
    <subcellularLocation>
        <location evidence="1">Cell inner membrane</location>
        <topology evidence="1">Multi-pass membrane protein</topology>
    </subcellularLocation>
</comment>
<comment type="similarity">
    <text evidence="1">Belongs to the WzyE family.</text>
</comment>